<comment type="function">
    <text evidence="1">One of the primary rRNA binding proteins, it binds directly to 16S rRNA where it nucleates assembly of the head domain of the 30S subunit. Is located at the subunit interface close to the decoding center, probably blocks exit of the E-site tRNA.</text>
</comment>
<comment type="subunit">
    <text evidence="1">Part of the 30S ribosomal subunit. Contacts proteins S9 and S11.</text>
</comment>
<comment type="similarity">
    <text evidence="1">Belongs to the universal ribosomal protein uS7 family.</text>
</comment>
<feature type="chain" id="PRO_1000125915" description="Small ribosomal subunit protein uS7">
    <location>
        <begin position="1"/>
        <end position="157"/>
    </location>
</feature>
<reference key="1">
    <citation type="journal article" date="1992" name="Mol. Microbiol.">
        <title>The gene for the S7 ribosomal protein of Chlamydia trachomatis: characterization within the chlamydial str operon.</title>
        <authorList>
            <person name="Wagar E.A."/>
            <person name="Pang M."/>
        </authorList>
    </citation>
    <scope>NUCLEOTIDE SEQUENCE [GENOMIC DNA]</scope>
</reference>
<reference key="2">
    <citation type="journal article" date="2008" name="Genome Res.">
        <title>Chlamydia trachomatis: genome sequence analysis of lymphogranuloma venereum isolates.</title>
        <authorList>
            <person name="Thomson N.R."/>
            <person name="Holden M.T.G."/>
            <person name="Carder C."/>
            <person name="Lennard N."/>
            <person name="Lockey S.J."/>
            <person name="Marsh P."/>
            <person name="Skipp P."/>
            <person name="O'Connor C.D."/>
            <person name="Goodhead I."/>
            <person name="Norbertzcak H."/>
            <person name="Harris B."/>
            <person name="Ormond D."/>
            <person name="Rance R."/>
            <person name="Quail M.A."/>
            <person name="Parkhill J."/>
            <person name="Stephens R.S."/>
            <person name="Clarke I.N."/>
        </authorList>
    </citation>
    <scope>NUCLEOTIDE SEQUENCE [LARGE SCALE GENOMIC DNA]</scope>
    <source>
        <strain>ATCC VR-902B / DSM 19102 / 434/Bu</strain>
    </source>
</reference>
<protein>
    <recommendedName>
        <fullName evidence="1">Small ribosomal subunit protein uS7</fullName>
    </recommendedName>
    <alternativeName>
        <fullName evidence="2">30S ribosomal protein S7</fullName>
    </alternativeName>
</protein>
<dbReference type="EMBL" id="Z11567">
    <property type="protein sequence ID" value="CAA77661.1"/>
    <property type="molecule type" value="Genomic_DNA"/>
</dbReference>
<dbReference type="EMBL" id="AM884176">
    <property type="protein sequence ID" value="CAP04136.1"/>
    <property type="molecule type" value="Genomic_DNA"/>
</dbReference>
<dbReference type="PIR" id="S19249">
    <property type="entry name" value="R3CWS7"/>
</dbReference>
<dbReference type="RefSeq" id="WP_009872655.1">
    <property type="nucleotide sequence ID" value="NC_010287.1"/>
</dbReference>
<dbReference type="RefSeq" id="YP_001654769.1">
    <property type="nucleotide sequence ID" value="NC_010287.1"/>
</dbReference>
<dbReference type="SMR" id="B0B810"/>
<dbReference type="KEGG" id="ctb:CTL0697"/>
<dbReference type="PATRIC" id="fig|471472.4.peg.749"/>
<dbReference type="HOGENOM" id="CLU_072226_1_1_0"/>
<dbReference type="Proteomes" id="UP001154402">
    <property type="component" value="Chromosome"/>
</dbReference>
<dbReference type="GO" id="GO:0015935">
    <property type="term" value="C:small ribosomal subunit"/>
    <property type="evidence" value="ECO:0007669"/>
    <property type="project" value="InterPro"/>
</dbReference>
<dbReference type="GO" id="GO:0019843">
    <property type="term" value="F:rRNA binding"/>
    <property type="evidence" value="ECO:0007669"/>
    <property type="project" value="UniProtKB-UniRule"/>
</dbReference>
<dbReference type="GO" id="GO:0003735">
    <property type="term" value="F:structural constituent of ribosome"/>
    <property type="evidence" value="ECO:0007669"/>
    <property type="project" value="InterPro"/>
</dbReference>
<dbReference type="GO" id="GO:0000049">
    <property type="term" value="F:tRNA binding"/>
    <property type="evidence" value="ECO:0007669"/>
    <property type="project" value="UniProtKB-UniRule"/>
</dbReference>
<dbReference type="GO" id="GO:0006412">
    <property type="term" value="P:translation"/>
    <property type="evidence" value="ECO:0007669"/>
    <property type="project" value="UniProtKB-UniRule"/>
</dbReference>
<dbReference type="CDD" id="cd14869">
    <property type="entry name" value="uS7_Bacteria"/>
    <property type="match status" value="1"/>
</dbReference>
<dbReference type="FunFam" id="1.10.455.10:FF:000001">
    <property type="entry name" value="30S ribosomal protein S7"/>
    <property type="match status" value="1"/>
</dbReference>
<dbReference type="Gene3D" id="1.10.455.10">
    <property type="entry name" value="Ribosomal protein S7 domain"/>
    <property type="match status" value="1"/>
</dbReference>
<dbReference type="HAMAP" id="MF_00480_B">
    <property type="entry name" value="Ribosomal_uS7_B"/>
    <property type="match status" value="1"/>
</dbReference>
<dbReference type="InterPro" id="IPR000235">
    <property type="entry name" value="Ribosomal_uS7"/>
</dbReference>
<dbReference type="InterPro" id="IPR005717">
    <property type="entry name" value="Ribosomal_uS7_bac/org-type"/>
</dbReference>
<dbReference type="InterPro" id="IPR020606">
    <property type="entry name" value="Ribosomal_uS7_CS"/>
</dbReference>
<dbReference type="InterPro" id="IPR023798">
    <property type="entry name" value="Ribosomal_uS7_dom"/>
</dbReference>
<dbReference type="InterPro" id="IPR036823">
    <property type="entry name" value="Ribosomal_uS7_dom_sf"/>
</dbReference>
<dbReference type="NCBIfam" id="TIGR01029">
    <property type="entry name" value="rpsG_bact"/>
    <property type="match status" value="1"/>
</dbReference>
<dbReference type="PANTHER" id="PTHR11205">
    <property type="entry name" value="RIBOSOMAL PROTEIN S7"/>
    <property type="match status" value="1"/>
</dbReference>
<dbReference type="Pfam" id="PF00177">
    <property type="entry name" value="Ribosomal_S7"/>
    <property type="match status" value="1"/>
</dbReference>
<dbReference type="PIRSF" id="PIRSF002122">
    <property type="entry name" value="RPS7p_RPS7a_RPS5e_RPS7o"/>
    <property type="match status" value="1"/>
</dbReference>
<dbReference type="SUPFAM" id="SSF47973">
    <property type="entry name" value="Ribosomal protein S7"/>
    <property type="match status" value="1"/>
</dbReference>
<dbReference type="PROSITE" id="PS00052">
    <property type="entry name" value="RIBOSOMAL_S7"/>
    <property type="match status" value="1"/>
</dbReference>
<proteinExistence type="inferred from homology"/>
<organism>
    <name type="scientific">Chlamydia trachomatis serovar L2 (strain ATCC VR-902B / DSM 19102 / 434/Bu)</name>
    <dbReference type="NCBI Taxonomy" id="471472"/>
    <lineage>
        <taxon>Bacteria</taxon>
        <taxon>Pseudomonadati</taxon>
        <taxon>Chlamydiota</taxon>
        <taxon>Chlamydiia</taxon>
        <taxon>Chlamydiales</taxon>
        <taxon>Chlamydiaceae</taxon>
        <taxon>Chlamydia/Chlamydophila group</taxon>
        <taxon>Chlamydia</taxon>
    </lineage>
</organism>
<name>RS7_CHLT2</name>
<keyword id="KW-0687">Ribonucleoprotein</keyword>
<keyword id="KW-0689">Ribosomal protein</keyword>
<keyword id="KW-0694">RNA-binding</keyword>
<keyword id="KW-0699">rRNA-binding</keyword>
<keyword id="KW-0820">tRNA-binding</keyword>
<evidence type="ECO:0000255" key="1">
    <source>
        <dbReference type="HAMAP-Rule" id="MF_00480"/>
    </source>
</evidence>
<evidence type="ECO:0000305" key="2"/>
<sequence length="157" mass="17799">MSRRHAAEKKVIPGDPVYGSVVLERFINKVMLHGKKSIARKIVYGALERFAKRLGLENPLEGFEEALENAKPILEVRSRRVGGATYQVPVEVAPDRRSCLAMQWIIKHARSKPGKCMEVGLANELIDCFNKQGATIKKREDTHRMAEANKAFAHYKW</sequence>
<accession>B0B810</accession>
<accession>O84445</accession>
<accession>P29765</accession>
<gene>
    <name evidence="1" type="primary">rpsG</name>
    <name type="ordered locus">CTL0697</name>
</gene>